<reference key="1">
    <citation type="journal article" date="2019" name="Org. Biomol. Chem.">
        <title>Post-genomic approach based discovery of alkylresorcinols from a cricket-associated fungus, Penicillium soppi.</title>
        <authorList>
            <person name="Kaneko A."/>
            <person name="Morishita Y."/>
            <person name="Tsukada K."/>
            <person name="Taniguchi T."/>
            <person name="Asai T."/>
        </authorList>
    </citation>
    <scope>NUCLEOTIDE SEQUENCE [GENOMIC DNA]</scope>
    <scope>FUNCTION</scope>
    <scope>PATHWAY</scope>
</reference>
<gene>
    <name evidence="7" type="primary">pspB</name>
</gene>
<keyword id="KW-0012">Acyltransferase</keyword>
<keyword id="KW-0808">Transferase</keyword>
<dbReference type="EC" id="2.3.1.-" evidence="6"/>
<dbReference type="SMR" id="P0DUK2"/>
<dbReference type="GO" id="GO:0016747">
    <property type="term" value="F:acyltransferase activity, transferring groups other than amino-acyl groups"/>
    <property type="evidence" value="ECO:0007669"/>
    <property type="project" value="InterPro"/>
</dbReference>
<dbReference type="GO" id="GO:0030639">
    <property type="term" value="P:polyketide biosynthetic process"/>
    <property type="evidence" value="ECO:0007669"/>
    <property type="project" value="TreeGrafter"/>
</dbReference>
<dbReference type="Gene3D" id="3.40.47.10">
    <property type="match status" value="2"/>
</dbReference>
<dbReference type="InterPro" id="IPR012328">
    <property type="entry name" value="Chalcone/stilbene_synt_C"/>
</dbReference>
<dbReference type="InterPro" id="IPR001099">
    <property type="entry name" value="Chalcone/stilbene_synt_N"/>
</dbReference>
<dbReference type="InterPro" id="IPR011141">
    <property type="entry name" value="Polyketide_synthase_type-III"/>
</dbReference>
<dbReference type="InterPro" id="IPR016039">
    <property type="entry name" value="Thiolase-like"/>
</dbReference>
<dbReference type="PANTHER" id="PTHR11877">
    <property type="entry name" value="HYDROXYMETHYLGLUTARYL-COA SYNTHASE"/>
    <property type="match status" value="1"/>
</dbReference>
<dbReference type="PANTHER" id="PTHR11877:SF46">
    <property type="entry name" value="TYPE III POLYKETIDE SYNTHASE A"/>
    <property type="match status" value="1"/>
</dbReference>
<dbReference type="Pfam" id="PF02797">
    <property type="entry name" value="Chal_sti_synt_C"/>
    <property type="match status" value="1"/>
</dbReference>
<dbReference type="Pfam" id="PF00195">
    <property type="entry name" value="Chal_sti_synt_N"/>
    <property type="match status" value="1"/>
</dbReference>
<dbReference type="PIRSF" id="PIRSF000451">
    <property type="entry name" value="PKS_III"/>
    <property type="match status" value="1"/>
</dbReference>
<dbReference type="SUPFAM" id="SSF53901">
    <property type="entry name" value="Thiolase-like"/>
    <property type="match status" value="2"/>
</dbReference>
<organism>
    <name type="scientific">Penicillium soppii</name>
    <dbReference type="NCBI Taxonomy" id="69789"/>
    <lineage>
        <taxon>Eukaryota</taxon>
        <taxon>Fungi</taxon>
        <taxon>Dikarya</taxon>
        <taxon>Ascomycota</taxon>
        <taxon>Pezizomycotina</taxon>
        <taxon>Eurotiomycetes</taxon>
        <taxon>Eurotiomycetidae</taxon>
        <taxon>Eurotiales</taxon>
        <taxon>Aspergillaceae</taxon>
        <taxon>Penicillium</taxon>
    </lineage>
</organism>
<sequence>MVLNHSPPPGLYITGLGSQYPPYLLGPEKLEEFAARFYDVESPGLKKLLQINRSSGIETRSAIRSYESGFATRPEAPTISELAEFYHQAGVDLTTQACKKALRESQISPQHVTHTIGVTCTNQGNPGFDLLVNRKLGLSANVDRMLLHGVGCAGGLAIMRAAAQIACGASMRRKPVRILAFACELCTPNVRHDLAFAEKAPNAENISIAGALFSDAAAAFVLCNEYAMAETEITPLFQLLEWGNSLIPDTVEHMAFFADVDGYRTVLTRDVPQYTKHAIGPMFEKLLPSYQSQIQSSSGEGVGEVAKSLGVSDFDWALHPGGEAIIEGAKQVLGLTEDQLQASREIYRTRGNSSSATVLIVLDRLRSLGKREYVVATSFGPGLAIEMAMLRRCEVDED</sequence>
<feature type="chain" id="PRO_0000452730" description="Type III polyketide synthase pspB">
    <location>
        <begin position="1"/>
        <end position="398"/>
    </location>
</feature>
<feature type="active site" description="Nucleophile" evidence="4 5">
    <location>
        <position position="152"/>
    </location>
</feature>
<feature type="binding site" evidence="1">
    <location>
        <begin position="47"/>
        <end position="54"/>
    </location>
    <ligand>
        <name>CoA</name>
        <dbReference type="ChEBI" id="CHEBI:57287"/>
    </ligand>
</feature>
<feature type="binding site" evidence="2">
    <location>
        <position position="47"/>
    </location>
    <ligand>
        <name>CoA</name>
        <dbReference type="ChEBI" id="CHEBI:57287"/>
    </ligand>
</feature>
<feature type="binding site" evidence="1">
    <location>
        <begin position="214"/>
        <end position="215"/>
    </location>
    <ligand>
        <name>substrate</name>
    </ligand>
</feature>
<feature type="binding site" evidence="2">
    <location>
        <position position="267"/>
    </location>
    <ligand>
        <name>CoA</name>
        <dbReference type="ChEBI" id="CHEBI:57287"/>
    </ligand>
</feature>
<feature type="binding site" evidence="3">
    <location>
        <begin position="321"/>
        <end position="324"/>
    </location>
    <ligand>
        <name>CoA</name>
        <dbReference type="ChEBI" id="CHEBI:57287"/>
    </ligand>
</feature>
<feature type="binding site" evidence="2">
    <location>
        <position position="321"/>
    </location>
    <ligand>
        <name>CoA</name>
        <dbReference type="ChEBI" id="CHEBI:57287"/>
    </ligand>
</feature>
<feature type="binding site" evidence="2">
    <location>
        <position position="324"/>
    </location>
    <ligand>
        <name>CoA</name>
        <dbReference type="ChEBI" id="CHEBI:57287"/>
    </ligand>
</feature>
<proteinExistence type="inferred from homology"/>
<protein>
    <recommendedName>
        <fullName evidence="7">Type III polyketide synthase pspB</fullName>
        <ecNumber evidence="6">2.3.1.-</ecNumber>
    </recommendedName>
    <alternativeName>
        <fullName evidence="7">Soppiline biosynthesis cluster protein B</fullName>
    </alternativeName>
</protein>
<evidence type="ECO:0000250" key="1">
    <source>
        <dbReference type="UniProtKB" id="P30074"/>
    </source>
</evidence>
<evidence type="ECO:0000250" key="2">
    <source>
        <dbReference type="UniProtKB" id="Q2U852"/>
    </source>
</evidence>
<evidence type="ECO:0000250" key="3">
    <source>
        <dbReference type="UniProtKB" id="Q58VP7"/>
    </source>
</evidence>
<evidence type="ECO:0000250" key="4">
    <source>
        <dbReference type="UniProtKB" id="Q94FV7"/>
    </source>
</evidence>
<evidence type="ECO:0000255" key="5">
    <source>
        <dbReference type="PROSITE-ProRule" id="PRU10023"/>
    </source>
</evidence>
<evidence type="ECO:0000269" key="6">
    <source>
    </source>
</evidence>
<evidence type="ECO:0000303" key="7">
    <source>
    </source>
</evidence>
<evidence type="ECO:0000305" key="8"/>
<comment type="function">
    <text evidence="6">Type III polyketide synthase; part of the gene cluster that mediates the biosynthesis of the alkylresorcinols called soppilines (PubMed:31086874). The biosynthesis starts with the HR-PKS pspA-catalyzed carbon chain assembly through nine chain elongation cycles, using acetyl CoA and malonyl CoA as a starter and extender units, respectively, to produce the polyketide soppiline A (PubMed:31086874). In the first round, the KR, DH, and CMeT domains work to produce 2-methyl-2-butenyl thioester (PubMed:31086874). In rounds 2 to 5, the KR, DH, and ER domains fully catalyze the reduction of the elongated beta-ketothioester, resulting in the insertion of eight methylene units (PubMed:31086874). The unusual Z,E,Z-triene motif is likely constructed during rounds 6 to 8 (PubMed:31086874). Typically, the DH domain introduces a double bond at an alpha,beta-position of an elongated polyketide chain, with the dehydration of a beta-hydroxy group (PubMed:31086874). The last extension cycle would be carried out with L-oriented beta-ketoreduction by the KR domain to produce beta-hydroxy carboxylic acid soppiline A (PubMed:31086874). The type III PKS pspB intercepts the elongated polyketide chain at round 8 from the HR-PKS pspA, followed by a tri-keto extension and decarboxylative aldol cyclization to produce 1,3,5-trisubstituted alkylresorcinol soppiline B (PubMed:31086874). Subsequently, the cytochrome P450 monooxygenase pspC catalyzes three-step oxidations at the C-4 methyl group to carboxylic acid to yield soppiline C (PubMed:31086874).</text>
</comment>
<comment type="catalytic activity">
    <reaction evidence="6">
        <text>11 malonyl-CoA + acetyl-CoA + S-adenosyl-L-methionine + 12 NADPH + 22 H(+) = soppiline B + S-adenosyl-L-homocysteine + 12 CO2 + 12 NADP(+) + 12 CoA + 8 H2O</text>
        <dbReference type="Rhea" id="RHEA:66940"/>
        <dbReference type="ChEBI" id="CHEBI:15377"/>
        <dbReference type="ChEBI" id="CHEBI:15378"/>
        <dbReference type="ChEBI" id="CHEBI:16526"/>
        <dbReference type="ChEBI" id="CHEBI:57287"/>
        <dbReference type="ChEBI" id="CHEBI:57288"/>
        <dbReference type="ChEBI" id="CHEBI:57384"/>
        <dbReference type="ChEBI" id="CHEBI:57783"/>
        <dbReference type="ChEBI" id="CHEBI:57856"/>
        <dbReference type="ChEBI" id="CHEBI:58349"/>
        <dbReference type="ChEBI" id="CHEBI:59789"/>
        <dbReference type="ChEBI" id="CHEBI:167549"/>
    </reaction>
    <physiologicalReaction direction="left-to-right" evidence="6">
        <dbReference type="Rhea" id="RHEA:66941"/>
    </physiologicalReaction>
</comment>
<comment type="pathway">
    <text evidence="6">Secondary metabolite biosynthesis.</text>
</comment>
<comment type="subunit">
    <text evidence="2">Homodimer.</text>
</comment>
<comment type="similarity">
    <text evidence="8">Belongs to the thiolase-like superfamily. Chalcone/stilbene synthases family.</text>
</comment>
<accession>P0DUK2</accession>
<name>PSPB_PENSO</name>